<accession>O87875</accession>
<proteinExistence type="evidence at protein level"/>
<protein>
    <recommendedName>
        <fullName>Benzoyl-CoA reductase subunit B</fullName>
        <ecNumber evidence="1 2">1.3.7.8</ecNumber>
    </recommendedName>
    <alternativeName>
        <fullName>3-hydroxybenzoyl-CoA reductase subunit beta</fullName>
        <ecNumber evidence="1 2">1.3.99.n1</ecNumber>
    </alternativeName>
</protein>
<sequence>MSAKTNPEVIKESSMVKQKEMIAGNYDRLTGTKESGEKVVSTFVPGNLNELIMCFDMVNNLPETNAIQNGMRKQSGGMIMDAEKAGHSEDVCTYVKADIGMMGRGNIAPNGKPMPAPDMLLLSYTGCFTFMKWFELLRHEYKCPTVMLQIPYQGDGKITKNMRDFVVKQLKEEVIPMFEQVSGVKFDIDRLREYLKNSAKAEDDLVWVLESAKNRPSPIDAYFGGVYYIGPMFTAFRGTADAVEYYGLLRGEIEQRIREGKGPITPEGDMKEEKYRLVVEGPPNWTSFREFWKLFYDEGAVVVASSYTKVGGLYDQGFRHDPNDPLGTLADYCLGCYTNNNLPQRVELLEKYMNEYQADGLLINSIKSCNSFSAGQLLMMREIEKRTGKPAAFIETDLVDPRYFSHANVKNRLESYFQMVDQKRSGASLATA</sequence>
<dbReference type="EC" id="1.3.7.8" evidence="1 2"/>
<dbReference type="EC" id="1.3.99.n1" evidence="1 2"/>
<dbReference type="EMBL" id="AJ224959">
    <property type="protein sequence ID" value="CAA12248.1"/>
    <property type="molecule type" value="Genomic_DNA"/>
</dbReference>
<dbReference type="SMR" id="O87875"/>
<dbReference type="KEGG" id="ag:CAA12248"/>
<dbReference type="BioCyc" id="MetaCyc:BCRBTHAUERA-MONOMER"/>
<dbReference type="SABIO-RK" id="O87875"/>
<dbReference type="GO" id="GO:0005524">
    <property type="term" value="F:ATP binding"/>
    <property type="evidence" value="ECO:0007669"/>
    <property type="project" value="UniProtKB-KW"/>
</dbReference>
<dbReference type="GO" id="GO:0018522">
    <property type="term" value="F:benzoyl-CoA reductase activity"/>
    <property type="evidence" value="ECO:0007669"/>
    <property type="project" value="UniProtKB-EC"/>
</dbReference>
<dbReference type="GO" id="GO:0051536">
    <property type="term" value="F:iron-sulfur cluster binding"/>
    <property type="evidence" value="ECO:0007669"/>
    <property type="project" value="UniProtKB-KW"/>
</dbReference>
<dbReference type="GO" id="GO:0046872">
    <property type="term" value="F:metal ion binding"/>
    <property type="evidence" value="ECO:0007669"/>
    <property type="project" value="UniProtKB-KW"/>
</dbReference>
<dbReference type="GO" id="GO:0009056">
    <property type="term" value="P:catabolic process"/>
    <property type="evidence" value="ECO:0007669"/>
    <property type="project" value="UniProtKB-KW"/>
</dbReference>
<dbReference type="Gene3D" id="3.40.50.11890">
    <property type="match status" value="1"/>
</dbReference>
<dbReference type="Gene3D" id="3.40.50.11900">
    <property type="match status" value="1"/>
</dbReference>
<dbReference type="InterPro" id="IPR011955">
    <property type="entry name" value="Benzoyl_CoA_Rdtase_B"/>
</dbReference>
<dbReference type="InterPro" id="IPR010327">
    <property type="entry name" value="FldB/FldC_alpha/beta"/>
</dbReference>
<dbReference type="NCBIfam" id="TIGR02260">
    <property type="entry name" value="benz_CoA_red_B"/>
    <property type="match status" value="1"/>
</dbReference>
<dbReference type="PANTHER" id="PTHR30548">
    <property type="entry name" value="2-HYDROXYGLUTARYL-COA DEHYDRATASE, D-COMPONENT-RELATED"/>
    <property type="match status" value="1"/>
</dbReference>
<dbReference type="PANTHER" id="PTHR30548:SF4">
    <property type="entry name" value="SUBUNIT OF OXYGEN-SENSITIVE 2-HYDROXYISOCAPROYL-COA DEHYDRATASE"/>
    <property type="match status" value="1"/>
</dbReference>
<dbReference type="Pfam" id="PF06050">
    <property type="entry name" value="HGD-D"/>
    <property type="match status" value="1"/>
</dbReference>
<evidence type="ECO:0000269" key="1">
    <source>
    </source>
</evidence>
<evidence type="ECO:0000269" key="2">
    <source>
    </source>
</evidence>
<evidence type="ECO:0000269" key="3">
    <source>
    </source>
</evidence>
<evidence type="ECO:0000305" key="4"/>
<evidence type="ECO:0000305" key="5">
    <source>
    </source>
</evidence>
<comment type="function">
    <text evidence="2">Catalyzes the anaerobic reduction of benzoyl-CoA and 3-hydroxybenzoyl-CoA to form cyclohexa-1,5-diene-1-carbonyl-CoA and 3-hydroxycyclohexa-1,5-diene-1-carbonyl-CoA, respectively. The enzyme also reduces other benzoyl-CoA analogs with small substituents at the aromatic ring.</text>
</comment>
<comment type="catalytic activity">
    <reaction evidence="1 2">
        <text>cyclohexa-1,5-diene-1-carbonyl-CoA + oxidized 2[4Fe-4S]-[ferredoxin] + 2 ADP + 2 phosphate = reduced 2[4Fe-4S]-[ferredoxin] + benzoyl-CoA + 2 ATP + 2 H2O</text>
        <dbReference type="Rhea" id="RHEA:30199"/>
        <dbReference type="Rhea" id="RHEA-COMP:10002"/>
        <dbReference type="Rhea" id="RHEA-COMP:10004"/>
        <dbReference type="ChEBI" id="CHEBI:15377"/>
        <dbReference type="ChEBI" id="CHEBI:30616"/>
        <dbReference type="ChEBI" id="CHEBI:33722"/>
        <dbReference type="ChEBI" id="CHEBI:33723"/>
        <dbReference type="ChEBI" id="CHEBI:43474"/>
        <dbReference type="ChEBI" id="CHEBI:57369"/>
        <dbReference type="ChEBI" id="CHEBI:57374"/>
        <dbReference type="ChEBI" id="CHEBI:456216"/>
        <dbReference type="EC" id="1.3.7.8"/>
    </reaction>
</comment>
<comment type="catalytic activity">
    <reaction evidence="1 2">
        <text>3-hydroxybenzoyl-CoA + AH2 + 2 ATP + 2 H2O = 3-hydroxycyclohexa-1,5-diene-1-carbonyl-CoA + A + 2 ADP + 2 phosphate + 2 H(+)</text>
        <dbReference type="Rhea" id="RHEA:25420"/>
        <dbReference type="ChEBI" id="CHEBI:13193"/>
        <dbReference type="ChEBI" id="CHEBI:15377"/>
        <dbReference type="ChEBI" id="CHEBI:15378"/>
        <dbReference type="ChEBI" id="CHEBI:17499"/>
        <dbReference type="ChEBI" id="CHEBI:30616"/>
        <dbReference type="ChEBI" id="CHEBI:43474"/>
        <dbReference type="ChEBI" id="CHEBI:57342"/>
        <dbReference type="ChEBI" id="CHEBI:58801"/>
        <dbReference type="ChEBI" id="CHEBI:456216"/>
        <dbReference type="EC" id="1.3.99.n1"/>
    </reaction>
</comment>
<comment type="cofactor">
    <cofactor evidence="2">
        <name>iron-sulfur cluster</name>
        <dbReference type="ChEBI" id="CHEBI:30408"/>
    </cofactor>
</comment>
<comment type="cofactor">
    <cofactor evidence="5">
        <name>an oxidized flavin</name>
        <dbReference type="ChEBI" id="CHEBI:60531"/>
    </cofactor>
</comment>
<comment type="biophysicochemical properties">
    <kinetics>
        <KM evidence="1 2">15 uM for benzoyl-CoA</KM>
        <KM evidence="1 2">20 uM for 3-hydroxybenzoyl-CoA</KM>
        <KM evidence="1 2">600 uM for ATP</KM>
    </kinetics>
    <phDependence>
        <text evidence="1 2">Optimum pH is 7.2-7.5.</text>
    </phDependence>
</comment>
<comment type="subunit">
    <text evidence="3">Heterotetramer composed of A, B, C, and D subunits.</text>
</comment>
<comment type="similarity">
    <text evidence="4">Belongs to the FldB/FldC dehydratase alpha/beta subunit family.</text>
</comment>
<feature type="initiator methionine" description="Removed" evidence="3">
    <location>
        <position position="1"/>
    </location>
</feature>
<feature type="chain" id="PRO_0000350731" description="Benzoyl-CoA reductase subunit B">
    <location>
        <begin position="2"/>
        <end position="432"/>
    </location>
</feature>
<organism>
    <name type="scientific">Thauera aromatica</name>
    <dbReference type="NCBI Taxonomy" id="59405"/>
    <lineage>
        <taxon>Bacteria</taxon>
        <taxon>Pseudomonadati</taxon>
        <taxon>Pseudomonadota</taxon>
        <taxon>Betaproteobacteria</taxon>
        <taxon>Rhodocyclales</taxon>
        <taxon>Zoogloeaceae</taxon>
        <taxon>Thauera</taxon>
    </lineage>
</organism>
<gene>
    <name type="primary">bcrB</name>
</gene>
<reference key="1">
    <citation type="journal article" date="1998" name="Eur. J. Biochem.">
        <title>Genes coding for the benzoyl-CoA pathway of anaerobic aromatic metabolism in the bacterium Thauera aromatica.</title>
        <authorList>
            <person name="Breese K."/>
            <person name="Boll M."/>
            <person name="Alt-Moerbe J."/>
            <person name="Schaegger H."/>
            <person name="Fuchs G."/>
        </authorList>
    </citation>
    <scope>NUCLEOTIDE SEQUENCE [GENOMIC DNA]</scope>
    <scope>PROTEIN SEQUENCE OF 2-16</scope>
    <scope>SUBUNIT</scope>
</reference>
<reference key="2">
    <citation type="journal article" date="1995" name="Eur. J. Biochem.">
        <title>Benzoyl-coenzyme A reductase (dearomatizing), a key enzyme of anaerobic aromatic metabolism. ATP dependence of the reaction, purification and some properties of the enzyme from Thauera aromatica strain K172.</title>
        <authorList>
            <person name="Boll M."/>
            <person name="Fuchs G."/>
        </authorList>
    </citation>
    <scope>FUNCTION</scope>
    <scope>CATALYTIC ACTIVITY</scope>
    <scope>SUBSTRATE SPECIFICITY</scope>
    <scope>BIOPHYSICOCHEMICAL PROPERTIES</scope>
    <scope>COFACTOR</scope>
    <source>
        <strain>DSM 6984 / CIP 107765 / K172</strain>
    </source>
</reference>
<reference key="3">
    <citation type="journal article" date="2001" name="J. Bacteriol.">
        <title>Anaerobic metabolism of 3-hydroxybenzoate by the denitrifying bacterium Thauera aromatica.</title>
        <authorList>
            <person name="Laempe D."/>
            <person name="Jahn M."/>
            <person name="Breese K."/>
            <person name="Schaegger H."/>
            <person name="Fuchs G."/>
        </authorList>
    </citation>
    <scope>CATALYTIC ACTIVITY</scope>
    <scope>BIOPHYSICOCHEMICAL PROPERTIES</scope>
    <source>
        <strain>DSM 6984 / CIP 107765 / K172</strain>
    </source>
</reference>
<name>BCRB_THAAR</name>
<keyword id="KW-0058">Aromatic hydrocarbons catabolism</keyword>
<keyword id="KW-0067">ATP-binding</keyword>
<keyword id="KW-0903">Direct protein sequencing</keyword>
<keyword id="KW-0285">Flavoprotein</keyword>
<keyword id="KW-0408">Iron</keyword>
<keyword id="KW-0411">Iron-sulfur</keyword>
<keyword id="KW-0479">Metal-binding</keyword>
<keyword id="KW-0547">Nucleotide-binding</keyword>
<keyword id="KW-0560">Oxidoreductase</keyword>